<dbReference type="EC" id="2.7.4.6" evidence="1"/>
<dbReference type="EMBL" id="AP008226">
    <property type="protein sequence ID" value="BAD70011.1"/>
    <property type="molecule type" value="Genomic_DNA"/>
</dbReference>
<dbReference type="RefSeq" id="WP_011227764.1">
    <property type="nucleotide sequence ID" value="NC_006461.1"/>
</dbReference>
<dbReference type="RefSeq" id="YP_143454.1">
    <property type="nucleotide sequence ID" value="NC_006461.1"/>
</dbReference>
<dbReference type="PDB" id="1WKJ">
    <property type="method" value="X-ray"/>
    <property type="resolution" value="2.00 A"/>
    <property type="chains" value="A/B=1-137"/>
</dbReference>
<dbReference type="PDB" id="1WKK">
    <property type="method" value="X-ray"/>
    <property type="resolution" value="2.70 A"/>
    <property type="chains" value="A/B=1-137"/>
</dbReference>
<dbReference type="PDB" id="1WKL">
    <property type="method" value="X-ray"/>
    <property type="resolution" value="2.20 A"/>
    <property type="chains" value="A/B=1-137"/>
</dbReference>
<dbReference type="PDBsum" id="1WKJ"/>
<dbReference type="PDBsum" id="1WKK"/>
<dbReference type="PDBsum" id="1WKL"/>
<dbReference type="SMR" id="Q5SLV5"/>
<dbReference type="EnsemblBacteria" id="BAD70011">
    <property type="protein sequence ID" value="BAD70011"/>
    <property type="gene ID" value="BAD70011"/>
</dbReference>
<dbReference type="GeneID" id="3169489"/>
<dbReference type="KEGG" id="ttj:TTHA0188"/>
<dbReference type="eggNOG" id="COG0105">
    <property type="taxonomic scope" value="Bacteria"/>
</dbReference>
<dbReference type="HOGENOM" id="CLU_060216_6_3_0"/>
<dbReference type="PhylomeDB" id="Q5SLV5"/>
<dbReference type="EvolutionaryTrace" id="Q5SLV5"/>
<dbReference type="Proteomes" id="UP000000532">
    <property type="component" value="Chromosome"/>
</dbReference>
<dbReference type="GO" id="GO:0005737">
    <property type="term" value="C:cytoplasm"/>
    <property type="evidence" value="ECO:0007669"/>
    <property type="project" value="UniProtKB-SubCell"/>
</dbReference>
<dbReference type="GO" id="GO:0005524">
    <property type="term" value="F:ATP binding"/>
    <property type="evidence" value="ECO:0007669"/>
    <property type="project" value="UniProtKB-UniRule"/>
</dbReference>
<dbReference type="GO" id="GO:0046872">
    <property type="term" value="F:metal ion binding"/>
    <property type="evidence" value="ECO:0007669"/>
    <property type="project" value="UniProtKB-KW"/>
</dbReference>
<dbReference type="GO" id="GO:0004550">
    <property type="term" value="F:nucleoside diphosphate kinase activity"/>
    <property type="evidence" value="ECO:0007669"/>
    <property type="project" value="UniProtKB-UniRule"/>
</dbReference>
<dbReference type="GO" id="GO:0006241">
    <property type="term" value="P:CTP biosynthetic process"/>
    <property type="evidence" value="ECO:0007669"/>
    <property type="project" value="UniProtKB-UniRule"/>
</dbReference>
<dbReference type="GO" id="GO:0006183">
    <property type="term" value="P:GTP biosynthetic process"/>
    <property type="evidence" value="ECO:0007669"/>
    <property type="project" value="UniProtKB-UniRule"/>
</dbReference>
<dbReference type="GO" id="GO:0006228">
    <property type="term" value="P:UTP biosynthetic process"/>
    <property type="evidence" value="ECO:0007669"/>
    <property type="project" value="UniProtKB-UniRule"/>
</dbReference>
<dbReference type="CDD" id="cd04413">
    <property type="entry name" value="NDPk_I"/>
    <property type="match status" value="1"/>
</dbReference>
<dbReference type="FunFam" id="3.30.70.141:FF:000003">
    <property type="entry name" value="Nucleoside diphosphate kinase"/>
    <property type="match status" value="1"/>
</dbReference>
<dbReference type="Gene3D" id="3.30.70.141">
    <property type="entry name" value="Nucleoside diphosphate kinase-like domain"/>
    <property type="match status" value="1"/>
</dbReference>
<dbReference type="HAMAP" id="MF_00451">
    <property type="entry name" value="NDP_kinase"/>
    <property type="match status" value="1"/>
</dbReference>
<dbReference type="InterPro" id="IPR034907">
    <property type="entry name" value="NDK-like_dom"/>
</dbReference>
<dbReference type="InterPro" id="IPR036850">
    <property type="entry name" value="NDK-like_dom_sf"/>
</dbReference>
<dbReference type="InterPro" id="IPR001564">
    <property type="entry name" value="Nucleoside_diP_kinase"/>
</dbReference>
<dbReference type="NCBIfam" id="NF001908">
    <property type="entry name" value="PRK00668.1"/>
    <property type="match status" value="1"/>
</dbReference>
<dbReference type="PANTHER" id="PTHR11349">
    <property type="entry name" value="NUCLEOSIDE DIPHOSPHATE KINASE"/>
    <property type="match status" value="1"/>
</dbReference>
<dbReference type="Pfam" id="PF00334">
    <property type="entry name" value="NDK"/>
    <property type="match status" value="1"/>
</dbReference>
<dbReference type="PRINTS" id="PR01243">
    <property type="entry name" value="NUCDPKINASE"/>
</dbReference>
<dbReference type="SMART" id="SM00562">
    <property type="entry name" value="NDK"/>
    <property type="match status" value="1"/>
</dbReference>
<dbReference type="SUPFAM" id="SSF54919">
    <property type="entry name" value="Nucleoside diphosphate kinase, NDK"/>
    <property type="match status" value="1"/>
</dbReference>
<dbReference type="PROSITE" id="PS51374">
    <property type="entry name" value="NDPK_LIKE"/>
    <property type="match status" value="1"/>
</dbReference>
<gene>
    <name evidence="1" type="primary">ndk</name>
    <name type="ordered locus">TTHA0188</name>
</gene>
<name>NDK_THET8</name>
<proteinExistence type="evidence at protein level"/>
<reference key="1">
    <citation type="submission" date="2004-11" db="EMBL/GenBank/DDBJ databases">
        <title>Complete genome sequence of Thermus thermophilus HB8.</title>
        <authorList>
            <person name="Masui R."/>
            <person name="Kurokawa K."/>
            <person name="Nakagawa N."/>
            <person name="Tokunaga F."/>
            <person name="Koyama Y."/>
            <person name="Shibata T."/>
            <person name="Oshima T."/>
            <person name="Yokoyama S."/>
            <person name="Yasunaga T."/>
            <person name="Kuramitsu S."/>
        </authorList>
    </citation>
    <scope>NUCLEOTIDE SEQUENCE [LARGE SCALE GENOMIC DNA]</scope>
    <source>
        <strain>ATCC 27634 / DSM 579 / HB8</strain>
    </source>
</reference>
<reference key="2">
    <citation type="journal article" date="2003" name="Acta Crystallogr. D">
        <title>Crystallization and preliminary X-ray diffraction studies of nucleoside diphosphate kinase from Thermus thermophilus HB8.</title>
        <authorList>
            <person name="Takeishi S."/>
            <person name="Nakagawa N."/>
            <person name="Maoka N."/>
            <person name="Kihara M."/>
            <person name="Moriguchi M."/>
            <person name="Masui R."/>
            <person name="Kuramitsu S."/>
        </authorList>
    </citation>
    <scope>X-RAY CRYSTALLOGRAPHY (2.0 ANGSTROMS) IN COMPLEX WITH ATP</scope>
</reference>
<comment type="function">
    <text evidence="1">Major role in the synthesis of nucleoside triphosphates other than ATP. The ATP gamma phosphate is transferred to the NDP beta phosphate via a ping-pong mechanism, using a phosphorylated active-site intermediate.</text>
</comment>
<comment type="catalytic activity">
    <reaction evidence="1">
        <text>a 2'-deoxyribonucleoside 5'-diphosphate + ATP = a 2'-deoxyribonucleoside 5'-triphosphate + ADP</text>
        <dbReference type="Rhea" id="RHEA:44640"/>
        <dbReference type="ChEBI" id="CHEBI:30616"/>
        <dbReference type="ChEBI" id="CHEBI:61560"/>
        <dbReference type="ChEBI" id="CHEBI:73316"/>
        <dbReference type="ChEBI" id="CHEBI:456216"/>
        <dbReference type="EC" id="2.7.4.6"/>
    </reaction>
</comment>
<comment type="catalytic activity">
    <reaction evidence="1">
        <text>a ribonucleoside 5'-diphosphate + ATP = a ribonucleoside 5'-triphosphate + ADP</text>
        <dbReference type="Rhea" id="RHEA:18113"/>
        <dbReference type="ChEBI" id="CHEBI:30616"/>
        <dbReference type="ChEBI" id="CHEBI:57930"/>
        <dbReference type="ChEBI" id="CHEBI:61557"/>
        <dbReference type="ChEBI" id="CHEBI:456216"/>
        <dbReference type="EC" id="2.7.4.6"/>
    </reaction>
</comment>
<comment type="cofactor">
    <cofactor evidence="1">
        <name>Mg(2+)</name>
        <dbReference type="ChEBI" id="CHEBI:18420"/>
    </cofactor>
</comment>
<comment type="subunit">
    <text evidence="1">Homotetramer.</text>
</comment>
<comment type="subcellular location">
    <subcellularLocation>
        <location evidence="1">Cytoplasm</location>
    </subcellularLocation>
</comment>
<comment type="similarity">
    <text evidence="1">Belongs to the NDK family.</text>
</comment>
<feature type="chain" id="PRO_0000137067" description="Nucleoside diphosphate kinase">
    <location>
        <begin position="1"/>
        <end position="137"/>
    </location>
</feature>
<feature type="active site" description="Pros-phosphohistidine intermediate" evidence="1">
    <location>
        <position position="115"/>
    </location>
</feature>
<feature type="binding site" evidence="1 2">
    <location>
        <position position="9"/>
    </location>
    <ligand>
        <name>ATP</name>
        <dbReference type="ChEBI" id="CHEBI:30616"/>
    </ligand>
</feature>
<feature type="binding site" evidence="1 2">
    <location>
        <position position="57"/>
    </location>
    <ligand>
        <name>ATP</name>
        <dbReference type="ChEBI" id="CHEBI:30616"/>
    </ligand>
</feature>
<feature type="binding site" evidence="1 2">
    <location>
        <position position="85"/>
    </location>
    <ligand>
        <name>ATP</name>
        <dbReference type="ChEBI" id="CHEBI:30616"/>
    </ligand>
</feature>
<feature type="binding site" evidence="1 2">
    <location>
        <position position="91"/>
    </location>
    <ligand>
        <name>ATP</name>
        <dbReference type="ChEBI" id="CHEBI:30616"/>
    </ligand>
</feature>
<feature type="binding site" evidence="1 2">
    <location>
        <position position="102"/>
    </location>
    <ligand>
        <name>ATP</name>
        <dbReference type="ChEBI" id="CHEBI:30616"/>
    </ligand>
</feature>
<feature type="binding site" evidence="1 2">
    <location>
        <position position="112"/>
    </location>
    <ligand>
        <name>ATP</name>
        <dbReference type="ChEBI" id="CHEBI:30616"/>
    </ligand>
</feature>
<feature type="strand" evidence="3">
    <location>
        <begin position="3"/>
        <end position="8"/>
    </location>
</feature>
<feature type="helix" evidence="3">
    <location>
        <begin position="10"/>
        <end position="14"/>
    </location>
</feature>
<feature type="helix" evidence="3">
    <location>
        <begin position="18"/>
        <end position="28"/>
    </location>
</feature>
<feature type="strand" evidence="3">
    <location>
        <begin position="31"/>
        <end position="38"/>
    </location>
</feature>
<feature type="helix" evidence="3">
    <location>
        <begin position="42"/>
        <end position="48"/>
    </location>
</feature>
<feature type="helix" evidence="3">
    <location>
        <begin position="50"/>
        <end position="52"/>
    </location>
</feature>
<feature type="strand" evidence="3">
    <location>
        <begin position="53"/>
        <end position="57"/>
    </location>
</feature>
<feature type="helix" evidence="3">
    <location>
        <begin position="58"/>
        <end position="65"/>
    </location>
</feature>
<feature type="strand" evidence="3">
    <location>
        <begin position="70"/>
        <end position="77"/>
    </location>
</feature>
<feature type="helix" evidence="3">
    <location>
        <begin position="80"/>
        <end position="88"/>
    </location>
</feature>
<feature type="turn" evidence="3">
    <location>
        <begin position="93"/>
        <end position="95"/>
    </location>
</feature>
<feature type="helix" evidence="3">
    <location>
        <begin position="101"/>
        <end position="105"/>
    </location>
</feature>
<feature type="strand" evidence="3">
    <location>
        <begin position="113"/>
        <end position="116"/>
    </location>
</feature>
<feature type="helix" evidence="3">
    <location>
        <begin position="120"/>
        <end position="130"/>
    </location>
</feature>
<feature type="helix" evidence="3">
    <location>
        <begin position="133"/>
        <end position="135"/>
    </location>
</feature>
<protein>
    <recommendedName>
        <fullName evidence="1">Nucleoside diphosphate kinase</fullName>
        <shortName evidence="1">NDK</shortName>
        <shortName evidence="1">NDP kinase</shortName>
        <ecNumber evidence="1">2.7.4.6</ecNumber>
    </recommendedName>
    <alternativeName>
        <fullName evidence="1">Nucleoside-2-P kinase</fullName>
    </alternativeName>
</protein>
<keyword id="KW-0002">3D-structure</keyword>
<keyword id="KW-0067">ATP-binding</keyword>
<keyword id="KW-0963">Cytoplasm</keyword>
<keyword id="KW-0418">Kinase</keyword>
<keyword id="KW-0460">Magnesium</keyword>
<keyword id="KW-0479">Metal-binding</keyword>
<keyword id="KW-0546">Nucleotide metabolism</keyword>
<keyword id="KW-0547">Nucleotide-binding</keyword>
<keyword id="KW-0597">Phosphoprotein</keyword>
<keyword id="KW-1185">Reference proteome</keyword>
<keyword id="KW-0808">Transferase</keyword>
<organism>
    <name type="scientific">Thermus thermophilus (strain ATCC 27634 / DSM 579 / HB8)</name>
    <dbReference type="NCBI Taxonomy" id="300852"/>
    <lineage>
        <taxon>Bacteria</taxon>
        <taxon>Thermotogati</taxon>
        <taxon>Deinococcota</taxon>
        <taxon>Deinococci</taxon>
        <taxon>Thermales</taxon>
        <taxon>Thermaceae</taxon>
        <taxon>Thermus</taxon>
    </lineage>
</organism>
<sequence length="137" mass="15344">MERTFVMIKPDGVRRGLVGEILARFERKGFRIAALKLMQISQELAERHYAEHREKPFFPGLVRFITSGPVVAMVLEGPGVVAEVRKMMGATHPKDALPGTIRGDFATTIDENVIHGSATLEDAQREIALFFRPEELL</sequence>
<accession>Q5SLV5</accession>
<evidence type="ECO:0000255" key="1">
    <source>
        <dbReference type="HAMAP-Rule" id="MF_00451"/>
    </source>
</evidence>
<evidence type="ECO:0000269" key="2">
    <source>
    </source>
</evidence>
<evidence type="ECO:0007829" key="3">
    <source>
        <dbReference type="PDB" id="1WKJ"/>
    </source>
</evidence>